<proteinExistence type="inferred from homology"/>
<comment type="function">
    <text evidence="1">Plays critical roles in virus replication, from virus entry and uncoating to assembly and budding of the virus particle. M1 binding to ribonucleocapsids (RNPs) in nucleus seems to inhibit viral transcription. Interaction of viral NEP with M1-RNP is thought to promote nuclear export of the complex, which is targeted to the virion assembly site at the apical plasma membrane in polarized epithelial cells. Interactions with NA and HA may bring M1, a non-raft-associated protein, into lipid rafts. Forms a continuous shell on the inner side of the lipid bilayer in virion, where it binds the RNP. During virus entry into cell, the M2 ion channel acidifies the internal virion core, inducing M1 dissociation from the RNP. M1-free RNPs are transported to the nucleus, where viral transcription and replication can take place.</text>
</comment>
<comment type="function">
    <text evidence="1">Determines the virion's shape: spherical or filamentous. Clinical isolates of influenza are characterized by the presence of significant proportion of filamentous virions, whereas after multiple passage on eggs or cell culture, virions have only spherical morphology. Filamentous virions are thought to be important to infect neighboring cells, and spherical virions more suited to spread through aerosol between hosts organisms.</text>
</comment>
<comment type="subunit">
    <text evidence="1">Homodimer and homomultimer. Interacts with NEP. Binds ribonucleocapsid by both interacting with genomic RNA and NP protein. May interact with HA and NA. Cannot bind NP without genomic RNA.</text>
</comment>
<comment type="subcellular location">
    <subcellularLocation>
        <location evidence="1">Virion membrane</location>
        <topology evidence="1">Peripheral membrane protein</topology>
        <orientation evidence="1">Cytoplasmic side</orientation>
    </subcellularLocation>
    <subcellularLocation>
        <location evidence="1">Host nucleus</location>
    </subcellularLocation>
</comment>
<comment type="alternative products">
    <event type="alternative splicing"/>
    <isoform>
        <id>Q6DPT8-1</id>
        <name>M1</name>
        <sequence type="displayed"/>
    </isoform>
    <isoform>
        <id>Q6DPT9-1</id>
        <name>M2</name>
        <sequence type="external"/>
    </isoform>
    <text>Only the first 9 residues are shared by the 2 isoforms.</text>
</comment>
<comment type="miscellaneous">
    <text evidence="1">Most abundant protein in virion. When expressed alone can form virus-like particles in transfected cells.</text>
</comment>
<comment type="similarity">
    <text evidence="1">Belongs to the influenza viruses Matrix protein M1 family.</text>
</comment>
<dbReference type="EMBL" id="AY651401">
    <property type="protein sequence ID" value="AAT70555.1"/>
    <property type="molecule type" value="Genomic_RNA"/>
</dbReference>
<dbReference type="SMR" id="Q6DPT8"/>
<dbReference type="GO" id="GO:0042025">
    <property type="term" value="C:host cell nucleus"/>
    <property type="evidence" value="ECO:0007669"/>
    <property type="project" value="UniProtKB-SubCell"/>
</dbReference>
<dbReference type="GO" id="GO:0016020">
    <property type="term" value="C:membrane"/>
    <property type="evidence" value="ECO:0007669"/>
    <property type="project" value="UniProtKB-KW"/>
</dbReference>
<dbReference type="GO" id="GO:0055036">
    <property type="term" value="C:virion membrane"/>
    <property type="evidence" value="ECO:0007669"/>
    <property type="project" value="UniProtKB-SubCell"/>
</dbReference>
<dbReference type="GO" id="GO:0003723">
    <property type="term" value="F:RNA binding"/>
    <property type="evidence" value="ECO:0007669"/>
    <property type="project" value="UniProtKB-UniRule"/>
</dbReference>
<dbReference type="GO" id="GO:0039660">
    <property type="term" value="F:structural constituent of virion"/>
    <property type="evidence" value="ECO:0007669"/>
    <property type="project" value="UniProtKB-UniRule"/>
</dbReference>
<dbReference type="GO" id="GO:0046761">
    <property type="term" value="P:viral budding from plasma membrane"/>
    <property type="evidence" value="ECO:0007669"/>
    <property type="project" value="UniProtKB-UniRule"/>
</dbReference>
<dbReference type="FunFam" id="1.10.10.180:FF:000001">
    <property type="entry name" value="Matrix protein 1"/>
    <property type="match status" value="1"/>
</dbReference>
<dbReference type="FunFam" id="1.20.91.10:FF:000001">
    <property type="entry name" value="Matrix protein 1"/>
    <property type="match status" value="1"/>
</dbReference>
<dbReference type="Gene3D" id="1.10.10.180">
    <property type="match status" value="1"/>
</dbReference>
<dbReference type="Gene3D" id="1.20.91.10">
    <property type="match status" value="1"/>
</dbReference>
<dbReference type="HAMAP" id="MF_04068">
    <property type="entry name" value="INFV_M1"/>
    <property type="match status" value="1"/>
</dbReference>
<dbReference type="InterPro" id="IPR036039">
    <property type="entry name" value="Flu_matrix_M1"/>
</dbReference>
<dbReference type="InterPro" id="IPR013188">
    <property type="entry name" value="Flu_matrix_M1_C"/>
</dbReference>
<dbReference type="InterPro" id="IPR001561">
    <property type="entry name" value="Flu_matrix_M1_N"/>
</dbReference>
<dbReference type="InterPro" id="IPR015423">
    <property type="entry name" value="Flu_matrix_M1_N_sub1"/>
</dbReference>
<dbReference type="InterPro" id="IPR015799">
    <property type="entry name" value="Flu_matrix_M1_N_sub2"/>
</dbReference>
<dbReference type="InterPro" id="IPR037533">
    <property type="entry name" value="INFV_M1"/>
</dbReference>
<dbReference type="Pfam" id="PF00598">
    <property type="entry name" value="Flu_M1"/>
    <property type="match status" value="1"/>
</dbReference>
<dbReference type="Pfam" id="PF08289">
    <property type="entry name" value="Flu_M1_C"/>
    <property type="match status" value="1"/>
</dbReference>
<dbReference type="SMART" id="SM00759">
    <property type="entry name" value="Flu_M1_C"/>
    <property type="match status" value="1"/>
</dbReference>
<dbReference type="SUPFAM" id="SSF48145">
    <property type="entry name" value="Influenza virus matrix protein M1"/>
    <property type="match status" value="1"/>
</dbReference>
<evidence type="ECO:0000255" key="1">
    <source>
        <dbReference type="HAMAP-Rule" id="MF_04068"/>
    </source>
</evidence>
<accession>Q6DPT8</accession>
<reference key="1">
    <citation type="journal article" date="2004" name="Nature">
        <title>Genesis of a highly pathogenic and potentially pandemic H5N1 influenza virus in eastern Asia.</title>
        <authorList>
            <person name="Li K.S."/>
            <person name="Guan Y."/>
            <person name="Wang J."/>
            <person name="Smith G.J.D."/>
            <person name="Xu K.M."/>
            <person name="Duan L."/>
            <person name="Rahardjo A.P."/>
            <person name="Puthavathana P."/>
            <person name="Buranathai C."/>
            <person name="Nguyen T.D."/>
            <person name="Estoepangestie A.T.S."/>
            <person name="Chaisingh A."/>
            <person name="Auewarakul P."/>
            <person name="Long H.T."/>
            <person name="Hanh N.T.H."/>
            <person name="Webby R.J."/>
            <person name="Poon L.L.M."/>
            <person name="Chen H."/>
            <person name="Shortridge K.F."/>
            <person name="Yuen K.Y."/>
            <person name="Webster R.G."/>
            <person name="Peiris J.S.M."/>
        </authorList>
    </citation>
    <scope>NUCLEOTIDE SEQUENCE [GENOMIC RNA]</scope>
</reference>
<protein>
    <recommendedName>
        <fullName evidence="1">Matrix protein 1</fullName>
        <shortName evidence="1">M1</shortName>
    </recommendedName>
</protein>
<feature type="chain" id="PRO_0000311613" description="Matrix protein 1">
    <location>
        <begin position="1"/>
        <end position="252"/>
    </location>
</feature>
<feature type="region of interest" description="Membrane-binding" evidence="1">
    <location>
        <begin position="1"/>
        <end position="164"/>
    </location>
</feature>
<feature type="region of interest" description="RNP-binding" evidence="1">
    <location>
        <begin position="165"/>
        <end position="252"/>
    </location>
</feature>
<feature type="short sequence motif" description="Nuclear localization signal" evidence="1">
    <location>
        <begin position="101"/>
        <end position="105"/>
    </location>
</feature>
<gene>
    <name evidence="1" type="primary">M</name>
</gene>
<sequence>MSLLTEVETYVLSIIPSGPLKAEIAQRLEDVFAGKNTDLEALMEWLKTRPILSPLTKGILGFVFTLTVPSERGLQRRRFVQNALNGNGDPNNMDRAVKLYKKLKREMTFHGAKEVALSYSTGALASCMGLIYNRMGTVTTEVALGLVCATCEQIADAQHRSHRQMATTTNPLIRHENRMVLASTTAKAMEQMAGSSEQAAEAMEVASQARQMVQAMRTIGTHPSSSAGLKDDLIENLQAYQKRMGVQMQRFK</sequence>
<organismHost>
    <name type="scientific">Aves</name>
    <dbReference type="NCBI Taxonomy" id="8782"/>
</organismHost>
<organismHost>
    <name type="scientific">Felis catus</name>
    <name type="common">Cat</name>
    <name type="synonym">Felis silvestris catus</name>
    <dbReference type="NCBI Taxonomy" id="9685"/>
</organismHost>
<organismHost>
    <name type="scientific">Homo sapiens</name>
    <name type="common">Human</name>
    <dbReference type="NCBI Taxonomy" id="9606"/>
</organismHost>
<organismHost>
    <name type="scientific">Panthera pardus</name>
    <name type="common">Leopard</name>
    <name type="synonym">Felis pardus</name>
    <dbReference type="NCBI Taxonomy" id="9691"/>
</organismHost>
<organismHost>
    <name type="scientific">Panthera tigris</name>
    <name type="common">Tiger</name>
    <dbReference type="NCBI Taxonomy" id="9694"/>
</organismHost>
<organismHost>
    <name type="scientific">Sus scrofa</name>
    <name type="common">Pig</name>
    <dbReference type="NCBI Taxonomy" id="9823"/>
</organismHost>
<organism>
    <name type="scientific">Influenza A virus (strain A/Chicken/Hong Kong/37.4/2002 H5N1 genotype X2)</name>
    <dbReference type="NCBI Taxonomy" id="284172"/>
    <lineage>
        <taxon>Viruses</taxon>
        <taxon>Riboviria</taxon>
        <taxon>Orthornavirae</taxon>
        <taxon>Negarnaviricota</taxon>
        <taxon>Polyploviricotina</taxon>
        <taxon>Insthoviricetes</taxon>
        <taxon>Articulavirales</taxon>
        <taxon>Orthomyxoviridae</taxon>
        <taxon>Alphainfluenzavirus</taxon>
        <taxon>Alphainfluenzavirus influenzae</taxon>
        <taxon>Influenza A virus</taxon>
    </lineage>
</organism>
<keyword id="KW-0025">Alternative splicing</keyword>
<keyword id="KW-1048">Host nucleus</keyword>
<keyword id="KW-0472">Membrane</keyword>
<keyword id="KW-0694">RNA-binding</keyword>
<keyword id="KW-0468">Viral matrix protein</keyword>
<keyword id="KW-0946">Virion</keyword>
<name>M1_I02A3</name>